<dbReference type="InParanoid" id="C0HLM9"/>
<dbReference type="Proteomes" id="UP000504607">
    <property type="component" value="Unplaced"/>
</dbReference>
<dbReference type="GO" id="GO:0045735">
    <property type="term" value="F:nutrient reservoir activity"/>
    <property type="evidence" value="ECO:0007669"/>
    <property type="project" value="UniProtKB-KW"/>
</dbReference>
<feature type="chain" id="PRO_0000448942" description="Globulin 2 basic chain">
    <location>
        <begin position="1"/>
        <end position="15" status="greater than"/>
    </location>
</feature>
<feature type="disulfide bond" description="Interchain (between acidic and basic chains)" evidence="1">
    <location>
        <begin position="7"/>
        <end status="unknown"/>
    </location>
</feature>
<feature type="non-terminal residue" evidence="3">
    <location>
        <position position="15"/>
    </location>
</feature>
<reference evidence="3" key="1">
    <citation type="submission" date="2019-10" db="UniProtKB">
        <title>Oil palm (Elaeis guineensis var. tenera) kernel globulin: Proteomic characterization.</title>
        <authorList>
            <person name="Tapal A."/>
            <person name="Martin A."/>
            <person name="Kaul Tiku P."/>
        </authorList>
    </citation>
    <scope>PROTEIN SEQUENCE</scope>
</reference>
<protein>
    <recommendedName>
        <fullName evidence="2">Globulin 2</fullName>
    </recommendedName>
    <alternativeName>
        <fullName evidence="3">11S globulin seed storage protein 2</fullName>
    </alternativeName>
    <component>
        <recommendedName>
            <fullName evidence="3">Globulin 2 basic chain</fullName>
        </recommendedName>
    </component>
</protein>
<comment type="function">
    <text evidence="1">Seed storage protein.</text>
</comment>
<comment type="subunit">
    <text evidence="1">Hexamer; each subunit is composed of an acidic and a basic chain derived from a single precursor and linked by a disulfide bond.</text>
</comment>
<comment type="similarity">
    <text evidence="3">Belongs to the 11S seed storage protein (globulins) family.</text>
</comment>
<organism>
    <name type="scientific">Elaeis guineensis var. tenera</name>
    <name type="common">Oil palm</name>
    <dbReference type="NCBI Taxonomy" id="51953"/>
    <lineage>
        <taxon>Eukaryota</taxon>
        <taxon>Viridiplantae</taxon>
        <taxon>Streptophyta</taxon>
        <taxon>Embryophyta</taxon>
        <taxon>Tracheophyta</taxon>
        <taxon>Spermatophyta</taxon>
        <taxon>Magnoliopsida</taxon>
        <taxon>Liliopsida</taxon>
        <taxon>Arecaceae</taxon>
        <taxon>Arecoideae</taxon>
        <taxon>Cocoseae</taxon>
        <taxon>Elaeidinae</taxon>
        <taxon>Elaeis</taxon>
    </lineage>
</organism>
<evidence type="ECO:0000250" key="1">
    <source>
        <dbReference type="UniProtKB" id="A0A222NNM9"/>
    </source>
</evidence>
<evidence type="ECO:0000303" key="2">
    <source ref="1"/>
</evidence>
<evidence type="ECO:0000305" key="3"/>
<accession>C0HLM9</accession>
<proteinExistence type="evidence at protein level"/>
<sequence>GLEETYCSMRIKENI</sequence>
<keyword id="KW-0903">Direct protein sequencing</keyword>
<keyword id="KW-1015">Disulfide bond</keyword>
<keyword id="KW-1185">Reference proteome</keyword>
<keyword id="KW-0708">Seed storage protein</keyword>
<keyword id="KW-0758">Storage protein</keyword>
<name>11S2_ELAGV</name>